<comment type="function">
    <text evidence="1 5 6">TATA box-binding transcription factor (By similarity). Members of the TBP family are differentially required to regulate transcription and development during early embryogenesis. Commits mesoderm to the hematopoietic lineage during hemopoiesis, acting via mespa. Binds to the mespa promoter.</text>
</comment>
<comment type="subcellular location">
    <subcellularLocation>
        <location evidence="1">Nucleus</location>
    </subcellularLocation>
</comment>
<comment type="tissue specificity">
    <text evidence="5">In adults, expressed in the gonads, with expression much higher in the ovary than the testis (at protein level). Shows a small amount of expression in other adult organs, including the brain and kidney. Embryonic expression is mostly ubiquitous except in early gastrula embryos where expression is asymmetric.</text>
</comment>
<comment type="developmental stage">
    <text evidence="5">Expressed both maternally and zygotically. Already present in fertilized eggs. Expression levels increase until the sphere stage and reduce gradually toward 24 hpf (at protein level).</text>
</comment>
<comment type="similarity">
    <text evidence="3">Belongs to the TBP family.</text>
</comment>
<evidence type="ECO:0000250" key="1">
    <source>
        <dbReference type="UniProtKB" id="Q5UE94"/>
    </source>
</evidence>
<evidence type="ECO:0000250" key="2">
    <source>
        <dbReference type="UniProtKB" id="Q6SJ94"/>
    </source>
</evidence>
<evidence type="ECO:0000255" key="3"/>
<evidence type="ECO:0000256" key="4">
    <source>
        <dbReference type="SAM" id="MobiDB-lite"/>
    </source>
</evidence>
<evidence type="ECO:0000269" key="5">
    <source>
    </source>
</evidence>
<evidence type="ECO:0000269" key="6">
    <source>
    </source>
</evidence>
<evidence type="ECO:0000303" key="7">
    <source>
    </source>
</evidence>
<evidence type="ECO:0000305" key="8"/>
<evidence type="ECO:0000312" key="9">
    <source>
        <dbReference type="EMBL" id="AAI16554.1"/>
    </source>
</evidence>
<evidence type="ECO:0000312" key="10">
    <source>
        <dbReference type="EMBL" id="AAP87373.1"/>
    </source>
</evidence>
<evidence type="ECO:0000312" key="11">
    <source>
        <dbReference type="ZFIN" id="ZDB-GENE-040520-3"/>
    </source>
</evidence>
<sequence length="312" mass="34738">MNMDEEASLESYFDQTIAGSSDYIFEGDLGLQGSTSQLQDSSFLSSLASQEKDLTEDLDLSFLPDELSTQDEPSQVEKESKNEDSGIYTDCPQKESTQADIDTSNSAQNTSQFNLPMTPMTPMTPMTPVAESSGIIPQLQNIVSTVNLACPLDLKSIALQARNAEYNPKRFAAVIMRIREPRTTALIFSSGKMVCTGAKSEEQSRLAARKYARVVQKLGFPAKFLDFKIQNMVGSCDVCFPIRLEGLVLTHQQFSSYEPELFPGLIYRMVKPRIVLLIFVSGKVVLTGAKERSEIYEAFENIYPILKGFRKQ</sequence>
<name>TBPL2_DANRE</name>
<protein>
    <recommendedName>
        <fullName evidence="2">TATA box-binding protein-like 2</fullName>
        <shortName evidence="2">TBP-like 2</shortName>
    </recommendedName>
    <alternativeName>
        <fullName evidence="7">TATA box-binding protein-related factor 3</fullName>
        <shortName evidence="7">TBP-related factor 3</shortName>
    </alternativeName>
</protein>
<accession>Q1JPY4</accession>
<accession>Q6X484</accession>
<reference evidence="8 10" key="1">
    <citation type="journal article" date="2004" name="Curr. Biol.">
        <title>TBP2, a vertebrate-specific member of the TBP family, is required in embryonic development of zebrafish.</title>
        <authorList>
            <person name="Bartfai R."/>
            <person name="Balduf C."/>
            <person name="Hilton T."/>
            <person name="Rathmann Y."/>
            <person name="Hadzhiev Y."/>
            <person name="Tora L."/>
            <person name="Orban L."/>
            <person name="Mueller F."/>
        </authorList>
    </citation>
    <scope>NUCLEOTIDE SEQUENCE [MRNA]</scope>
    <scope>FUNCTION</scope>
    <scope>TISSUE SPECIFICITY</scope>
    <scope>DEVELOPMENTAL STAGE</scope>
    <source>
        <strain evidence="10">AB</strain>
        <tissue evidence="5">Gonad</tissue>
    </source>
</reference>
<reference evidence="9" key="2">
    <citation type="submission" date="2006-05" db="EMBL/GenBank/DDBJ databases">
        <authorList>
            <consortium name="NIH - Zebrafish Gene Collection (ZGC) project"/>
        </authorList>
    </citation>
    <scope>NUCLEOTIDE SEQUENCE [LARGE SCALE MRNA]</scope>
    <source>
        <tissue evidence="9">Ovary</tissue>
    </source>
</reference>
<reference evidence="8" key="3">
    <citation type="journal article" date="2007" name="Nature">
        <title>Initiation of zebrafish haematopoiesis by the TATA-box-binding protein-related factor Trf3.</title>
        <authorList>
            <person name="Hart D.O."/>
            <person name="Raha T."/>
            <person name="Lawson N.D."/>
            <person name="Green M.R."/>
        </authorList>
    </citation>
    <scope>FUNCTION</scope>
</reference>
<keyword id="KW-0217">Developmental protein</keyword>
<keyword id="KW-0238">DNA-binding</keyword>
<keyword id="KW-0539">Nucleus</keyword>
<keyword id="KW-1185">Reference proteome</keyword>
<keyword id="KW-0804">Transcription</keyword>
<keyword id="KW-0805">Transcription regulation</keyword>
<dbReference type="EMBL" id="AY256970">
    <property type="protein sequence ID" value="AAP87373.1"/>
    <property type="molecule type" value="mRNA"/>
</dbReference>
<dbReference type="EMBL" id="BC116553">
    <property type="protein sequence ID" value="AAI16554.1"/>
    <property type="molecule type" value="mRNA"/>
</dbReference>
<dbReference type="RefSeq" id="NP_999961.1">
    <property type="nucleotide sequence ID" value="NM_214796.1"/>
</dbReference>
<dbReference type="SMR" id="Q1JPY4"/>
<dbReference type="FunCoup" id="Q1JPY4">
    <property type="interactions" value="1863"/>
</dbReference>
<dbReference type="STRING" id="7955.ENSDARP00000051526"/>
<dbReference type="PaxDb" id="7955-ENSDARP00000051526"/>
<dbReference type="Ensembl" id="ENSDART00000051527">
    <property type="protein sequence ID" value="ENSDARP00000051526"/>
    <property type="gene ID" value="ENSDARG00000097302"/>
</dbReference>
<dbReference type="GeneID" id="407713"/>
<dbReference type="KEGG" id="dre:407713"/>
<dbReference type="AGR" id="ZFIN:ZDB-GENE-040520-3"/>
<dbReference type="CTD" id="387332"/>
<dbReference type="ZFIN" id="ZDB-GENE-040520-3">
    <property type="gene designation" value="tbpl2"/>
</dbReference>
<dbReference type="eggNOG" id="KOG3302">
    <property type="taxonomic scope" value="Eukaryota"/>
</dbReference>
<dbReference type="HOGENOM" id="CLU_060161_1_2_1"/>
<dbReference type="InParanoid" id="Q1JPY4"/>
<dbReference type="OMA" id="FTPSECR"/>
<dbReference type="OrthoDB" id="2127950at2759"/>
<dbReference type="PhylomeDB" id="Q1JPY4"/>
<dbReference type="PRO" id="PR:Q1JPY4"/>
<dbReference type="Proteomes" id="UP000000437">
    <property type="component" value="Chromosome 17"/>
</dbReference>
<dbReference type="Bgee" id="ENSDARG00000097302">
    <property type="expression patterns" value="Expressed in mature ovarian follicle and 15 other cell types or tissues"/>
</dbReference>
<dbReference type="ExpressionAtlas" id="Q1JPY4">
    <property type="expression patterns" value="baseline"/>
</dbReference>
<dbReference type="GO" id="GO:0005634">
    <property type="term" value="C:nucleus"/>
    <property type="evidence" value="ECO:0000250"/>
    <property type="project" value="UniProtKB"/>
</dbReference>
<dbReference type="GO" id="GO:0003677">
    <property type="term" value="F:DNA binding"/>
    <property type="evidence" value="ECO:0000314"/>
    <property type="project" value="UniProtKB"/>
</dbReference>
<dbReference type="GO" id="GO:0016251">
    <property type="term" value="F:RNA polymerase II general transcription initiation factor activity"/>
    <property type="evidence" value="ECO:0000318"/>
    <property type="project" value="GO_Central"/>
</dbReference>
<dbReference type="GO" id="GO:0006352">
    <property type="term" value="P:DNA-templated transcription initiation"/>
    <property type="evidence" value="ECO:0000314"/>
    <property type="project" value="ZFIN"/>
</dbReference>
<dbReference type="GO" id="GO:0009792">
    <property type="term" value="P:embryo development ending in birth or egg hatching"/>
    <property type="evidence" value="ECO:0000315"/>
    <property type="project" value="UniProtKB"/>
</dbReference>
<dbReference type="GO" id="GO:0009880">
    <property type="term" value="P:embryonic pattern specification"/>
    <property type="evidence" value="ECO:0000315"/>
    <property type="project" value="UniProtKB"/>
</dbReference>
<dbReference type="GO" id="GO:0030097">
    <property type="term" value="P:hemopoiesis"/>
    <property type="evidence" value="ECO:0000315"/>
    <property type="project" value="UniProtKB"/>
</dbReference>
<dbReference type="CDD" id="cd04516">
    <property type="entry name" value="TBP_eukaryotes"/>
    <property type="match status" value="1"/>
</dbReference>
<dbReference type="FunFam" id="3.30.310.10:FF:000001">
    <property type="entry name" value="TATA-box-binding protein 2"/>
    <property type="match status" value="1"/>
</dbReference>
<dbReference type="FunFam" id="3.30.310.10:FF:000002">
    <property type="entry name" value="TATA-box-binding protein 2"/>
    <property type="match status" value="1"/>
</dbReference>
<dbReference type="Gene3D" id="3.30.310.10">
    <property type="entry name" value="TATA-Binding Protein"/>
    <property type="match status" value="2"/>
</dbReference>
<dbReference type="HAMAP" id="MF_00408">
    <property type="entry name" value="TATA_bind_prot_arch"/>
    <property type="match status" value="1"/>
</dbReference>
<dbReference type="InterPro" id="IPR000814">
    <property type="entry name" value="TBP"/>
</dbReference>
<dbReference type="InterPro" id="IPR030491">
    <property type="entry name" value="TBP_CS"/>
</dbReference>
<dbReference type="InterPro" id="IPR012295">
    <property type="entry name" value="TBP_dom_sf"/>
</dbReference>
<dbReference type="InterPro" id="IPR033710">
    <property type="entry name" value="TBP_eukaryotic"/>
</dbReference>
<dbReference type="PANTHER" id="PTHR10126">
    <property type="entry name" value="TATA-BOX BINDING PROTEIN"/>
    <property type="match status" value="1"/>
</dbReference>
<dbReference type="Pfam" id="PF00352">
    <property type="entry name" value="TBP"/>
    <property type="match status" value="2"/>
</dbReference>
<dbReference type="PRINTS" id="PR00686">
    <property type="entry name" value="TIFACTORIID"/>
</dbReference>
<dbReference type="SUPFAM" id="SSF55945">
    <property type="entry name" value="TATA-box binding protein-like"/>
    <property type="match status" value="2"/>
</dbReference>
<dbReference type="PROSITE" id="PS00351">
    <property type="entry name" value="TFIID"/>
    <property type="match status" value="2"/>
</dbReference>
<proteinExistence type="evidence at protein level"/>
<gene>
    <name evidence="11" type="primary">tbpl2</name>
    <name type="synonym">tbp2</name>
    <name evidence="7" type="synonym">trf3</name>
</gene>
<feature type="chain" id="PRO_0000349148" description="TATA box-binding protein-like 2">
    <location>
        <begin position="1"/>
        <end position="312"/>
    </location>
</feature>
<feature type="region of interest" description="Disordered" evidence="4">
    <location>
        <begin position="65"/>
        <end position="115"/>
    </location>
</feature>
<feature type="compositionally biased region" description="Basic and acidic residues" evidence="4">
    <location>
        <begin position="75"/>
        <end position="84"/>
    </location>
</feature>
<feature type="compositionally biased region" description="Polar residues" evidence="4">
    <location>
        <begin position="94"/>
        <end position="115"/>
    </location>
</feature>
<organism>
    <name type="scientific">Danio rerio</name>
    <name type="common">Zebrafish</name>
    <name type="synonym">Brachydanio rerio</name>
    <dbReference type="NCBI Taxonomy" id="7955"/>
    <lineage>
        <taxon>Eukaryota</taxon>
        <taxon>Metazoa</taxon>
        <taxon>Chordata</taxon>
        <taxon>Craniata</taxon>
        <taxon>Vertebrata</taxon>
        <taxon>Euteleostomi</taxon>
        <taxon>Actinopterygii</taxon>
        <taxon>Neopterygii</taxon>
        <taxon>Teleostei</taxon>
        <taxon>Ostariophysi</taxon>
        <taxon>Cypriniformes</taxon>
        <taxon>Danionidae</taxon>
        <taxon>Danioninae</taxon>
        <taxon>Danio</taxon>
    </lineage>
</organism>